<keyword id="KW-0963">Cytoplasm</keyword>
<keyword id="KW-0489">Methyltransferase</keyword>
<keyword id="KW-1185">Reference proteome</keyword>
<keyword id="KW-0694">RNA-binding</keyword>
<keyword id="KW-0698">rRNA processing</keyword>
<keyword id="KW-0949">S-adenosyl-L-methionine</keyword>
<keyword id="KW-0808">Transferase</keyword>
<protein>
    <recommendedName>
        <fullName evidence="1">Ribosomal RNA small subunit methyltransferase A</fullName>
        <ecNumber evidence="1">2.1.1.182</ecNumber>
    </recommendedName>
    <alternativeName>
        <fullName evidence="1">16S rRNA (adenine(1518)-N(6)/adenine(1519)-N(6))-dimethyltransferase</fullName>
    </alternativeName>
    <alternativeName>
        <fullName evidence="1">16S rRNA dimethyladenosine transferase</fullName>
    </alternativeName>
    <alternativeName>
        <fullName evidence="1">16S rRNA dimethylase</fullName>
    </alternativeName>
    <alternativeName>
        <fullName evidence="1">S-adenosylmethionine-6-N', N'-adenosyl(rRNA) dimethyltransferase</fullName>
    </alternativeName>
</protein>
<gene>
    <name evidence="1" type="primary">rsmA</name>
    <name evidence="1" type="synonym">ksgA</name>
    <name type="ordered locus">ABO_2048</name>
</gene>
<comment type="function">
    <text evidence="1">Specifically dimethylates two adjacent adenosines (A1518 and A1519) in the loop of a conserved hairpin near the 3'-end of 16S rRNA in the 30S particle. May play a critical role in biogenesis of 30S subunits.</text>
</comment>
<comment type="catalytic activity">
    <reaction evidence="1">
        <text>adenosine(1518)/adenosine(1519) in 16S rRNA + 4 S-adenosyl-L-methionine = N(6)-dimethyladenosine(1518)/N(6)-dimethyladenosine(1519) in 16S rRNA + 4 S-adenosyl-L-homocysteine + 4 H(+)</text>
        <dbReference type="Rhea" id="RHEA:19609"/>
        <dbReference type="Rhea" id="RHEA-COMP:10232"/>
        <dbReference type="Rhea" id="RHEA-COMP:10233"/>
        <dbReference type="ChEBI" id="CHEBI:15378"/>
        <dbReference type="ChEBI" id="CHEBI:57856"/>
        <dbReference type="ChEBI" id="CHEBI:59789"/>
        <dbReference type="ChEBI" id="CHEBI:74411"/>
        <dbReference type="ChEBI" id="CHEBI:74493"/>
        <dbReference type="EC" id="2.1.1.182"/>
    </reaction>
</comment>
<comment type="subcellular location">
    <subcellularLocation>
        <location evidence="1">Cytoplasm</location>
    </subcellularLocation>
</comment>
<comment type="similarity">
    <text evidence="1">Belongs to the class I-like SAM-binding methyltransferase superfamily. rRNA adenine N(6)-methyltransferase family. RsmA subfamily.</text>
</comment>
<accession>Q0VMV2</accession>
<evidence type="ECO:0000255" key="1">
    <source>
        <dbReference type="HAMAP-Rule" id="MF_00607"/>
    </source>
</evidence>
<evidence type="ECO:0000256" key="2">
    <source>
        <dbReference type="SAM" id="MobiDB-lite"/>
    </source>
</evidence>
<sequence>MKEHRTRKRFGQHFLHDRNLVDRMIRTLGLQTGDTLVEIGPGRGALTYPLLEELPHLHVVELDRDLIALLRQENTPERLTIHESDALRFDFRTLKPADKPLRVIGNLPYNISTPLIFHLLAQADAISDMTFMLQKEVVERLTASPGTRDWGRLSIMVQYHCQADYLFFVPPEAFSPPPRVDSAVVRLIPHDSPPHPADDEDHLRKLVAQAFTQRRKAIRNGLKSWVSAEQFQAVGIDAGLRPDQLSVADYVALANISRPPADVEDANAPHTEQGKGDNSQ</sequence>
<proteinExistence type="inferred from homology"/>
<feature type="chain" id="PRO_0000271896" description="Ribosomal RNA small subunit methyltransferase A">
    <location>
        <begin position="1"/>
        <end position="280"/>
    </location>
</feature>
<feature type="region of interest" description="Disordered" evidence="2">
    <location>
        <begin position="258"/>
        <end position="280"/>
    </location>
</feature>
<feature type="binding site" evidence="1">
    <location>
        <position position="13"/>
    </location>
    <ligand>
        <name>S-adenosyl-L-methionine</name>
        <dbReference type="ChEBI" id="CHEBI:59789"/>
    </ligand>
</feature>
<feature type="binding site" evidence="1">
    <location>
        <position position="15"/>
    </location>
    <ligand>
        <name>S-adenosyl-L-methionine</name>
        <dbReference type="ChEBI" id="CHEBI:59789"/>
    </ligand>
</feature>
<feature type="binding site" evidence="1">
    <location>
        <position position="40"/>
    </location>
    <ligand>
        <name>S-adenosyl-L-methionine</name>
        <dbReference type="ChEBI" id="CHEBI:59789"/>
    </ligand>
</feature>
<feature type="binding site" evidence="1">
    <location>
        <position position="61"/>
    </location>
    <ligand>
        <name>S-adenosyl-L-methionine</name>
        <dbReference type="ChEBI" id="CHEBI:59789"/>
    </ligand>
</feature>
<feature type="binding site" evidence="1">
    <location>
        <position position="85"/>
    </location>
    <ligand>
        <name>S-adenosyl-L-methionine</name>
        <dbReference type="ChEBI" id="CHEBI:59789"/>
    </ligand>
</feature>
<feature type="binding site" evidence="1">
    <location>
        <position position="106"/>
    </location>
    <ligand>
        <name>S-adenosyl-L-methionine</name>
        <dbReference type="ChEBI" id="CHEBI:59789"/>
    </ligand>
</feature>
<dbReference type="EC" id="2.1.1.182" evidence="1"/>
<dbReference type="EMBL" id="AM286690">
    <property type="protein sequence ID" value="CAL17496.1"/>
    <property type="molecule type" value="Genomic_DNA"/>
</dbReference>
<dbReference type="RefSeq" id="WP_011589327.1">
    <property type="nucleotide sequence ID" value="NC_008260.1"/>
</dbReference>
<dbReference type="SMR" id="Q0VMV2"/>
<dbReference type="STRING" id="393595.ABO_2048"/>
<dbReference type="KEGG" id="abo:ABO_2048"/>
<dbReference type="eggNOG" id="COG0030">
    <property type="taxonomic scope" value="Bacteria"/>
</dbReference>
<dbReference type="HOGENOM" id="CLU_041220_0_1_6"/>
<dbReference type="OrthoDB" id="9814755at2"/>
<dbReference type="Proteomes" id="UP000008871">
    <property type="component" value="Chromosome"/>
</dbReference>
<dbReference type="GO" id="GO:0005829">
    <property type="term" value="C:cytosol"/>
    <property type="evidence" value="ECO:0007669"/>
    <property type="project" value="TreeGrafter"/>
</dbReference>
<dbReference type="GO" id="GO:0052908">
    <property type="term" value="F:16S rRNA (adenine(1518)-N(6)/adenine(1519)-N(6))-dimethyltransferase activity"/>
    <property type="evidence" value="ECO:0007669"/>
    <property type="project" value="UniProtKB-EC"/>
</dbReference>
<dbReference type="GO" id="GO:0003723">
    <property type="term" value="F:RNA binding"/>
    <property type="evidence" value="ECO:0007669"/>
    <property type="project" value="UniProtKB-KW"/>
</dbReference>
<dbReference type="CDD" id="cd02440">
    <property type="entry name" value="AdoMet_MTases"/>
    <property type="match status" value="1"/>
</dbReference>
<dbReference type="FunFam" id="1.10.8.100:FF:000001">
    <property type="entry name" value="Ribosomal RNA small subunit methyltransferase A"/>
    <property type="match status" value="1"/>
</dbReference>
<dbReference type="Gene3D" id="1.10.8.100">
    <property type="entry name" value="Ribosomal RNA adenine dimethylase-like, domain 2"/>
    <property type="match status" value="1"/>
</dbReference>
<dbReference type="Gene3D" id="3.40.50.150">
    <property type="entry name" value="Vaccinia Virus protein VP39"/>
    <property type="match status" value="1"/>
</dbReference>
<dbReference type="HAMAP" id="MF_00607">
    <property type="entry name" value="16SrRNA_methyltr_A"/>
    <property type="match status" value="1"/>
</dbReference>
<dbReference type="InterPro" id="IPR001737">
    <property type="entry name" value="KsgA/Erm"/>
</dbReference>
<dbReference type="InterPro" id="IPR023165">
    <property type="entry name" value="rRNA_Ade_diMease-like_C"/>
</dbReference>
<dbReference type="InterPro" id="IPR020596">
    <property type="entry name" value="rRNA_Ade_Mease_Trfase_CS"/>
</dbReference>
<dbReference type="InterPro" id="IPR020598">
    <property type="entry name" value="rRNA_Ade_methylase_Trfase_N"/>
</dbReference>
<dbReference type="InterPro" id="IPR011530">
    <property type="entry name" value="rRNA_adenine_dimethylase"/>
</dbReference>
<dbReference type="InterPro" id="IPR029063">
    <property type="entry name" value="SAM-dependent_MTases_sf"/>
</dbReference>
<dbReference type="NCBIfam" id="TIGR00755">
    <property type="entry name" value="ksgA"/>
    <property type="match status" value="1"/>
</dbReference>
<dbReference type="PANTHER" id="PTHR11727">
    <property type="entry name" value="DIMETHYLADENOSINE TRANSFERASE"/>
    <property type="match status" value="1"/>
</dbReference>
<dbReference type="PANTHER" id="PTHR11727:SF7">
    <property type="entry name" value="DIMETHYLADENOSINE TRANSFERASE-RELATED"/>
    <property type="match status" value="1"/>
</dbReference>
<dbReference type="Pfam" id="PF00398">
    <property type="entry name" value="RrnaAD"/>
    <property type="match status" value="1"/>
</dbReference>
<dbReference type="SMART" id="SM00650">
    <property type="entry name" value="rADc"/>
    <property type="match status" value="1"/>
</dbReference>
<dbReference type="SUPFAM" id="SSF53335">
    <property type="entry name" value="S-adenosyl-L-methionine-dependent methyltransferases"/>
    <property type="match status" value="1"/>
</dbReference>
<dbReference type="PROSITE" id="PS01131">
    <property type="entry name" value="RRNA_A_DIMETH"/>
    <property type="match status" value="1"/>
</dbReference>
<dbReference type="PROSITE" id="PS51689">
    <property type="entry name" value="SAM_RNA_A_N6_MT"/>
    <property type="match status" value="1"/>
</dbReference>
<reference key="1">
    <citation type="journal article" date="2006" name="Nat. Biotechnol.">
        <title>Genome sequence of the ubiquitous hydrocarbon-degrading marine bacterium Alcanivorax borkumensis.</title>
        <authorList>
            <person name="Schneiker S."/>
            <person name="Martins dos Santos V.A.P."/>
            <person name="Bartels D."/>
            <person name="Bekel T."/>
            <person name="Brecht M."/>
            <person name="Buhrmester J."/>
            <person name="Chernikova T.N."/>
            <person name="Denaro R."/>
            <person name="Ferrer M."/>
            <person name="Gertler C."/>
            <person name="Goesmann A."/>
            <person name="Golyshina O.V."/>
            <person name="Kaminski F."/>
            <person name="Khachane A.N."/>
            <person name="Lang S."/>
            <person name="Linke B."/>
            <person name="McHardy A.C."/>
            <person name="Meyer F."/>
            <person name="Nechitaylo T."/>
            <person name="Puehler A."/>
            <person name="Regenhardt D."/>
            <person name="Rupp O."/>
            <person name="Sabirova J.S."/>
            <person name="Selbitschka W."/>
            <person name="Yakimov M.M."/>
            <person name="Timmis K.N."/>
            <person name="Vorhoelter F.-J."/>
            <person name="Weidner S."/>
            <person name="Kaiser O."/>
            <person name="Golyshin P.N."/>
        </authorList>
    </citation>
    <scope>NUCLEOTIDE SEQUENCE [LARGE SCALE GENOMIC DNA]</scope>
    <source>
        <strain>ATCC 700651 / DSM 11573 / NCIMB 13689 / SK2</strain>
    </source>
</reference>
<name>RSMA_ALCBS</name>
<organism>
    <name type="scientific">Alcanivorax borkumensis (strain ATCC 700651 / DSM 11573 / NCIMB 13689 / SK2)</name>
    <dbReference type="NCBI Taxonomy" id="393595"/>
    <lineage>
        <taxon>Bacteria</taxon>
        <taxon>Pseudomonadati</taxon>
        <taxon>Pseudomonadota</taxon>
        <taxon>Gammaproteobacteria</taxon>
        <taxon>Oceanospirillales</taxon>
        <taxon>Alcanivoracaceae</taxon>
        <taxon>Alcanivorax</taxon>
    </lineage>
</organism>